<protein>
    <recommendedName>
        <fullName evidence="1">CDP-diacylglycerol pyrophosphatase</fullName>
        <ecNumber evidence="1">3.6.1.26</ecNumber>
    </recommendedName>
    <alternativeName>
        <fullName evidence="1">CDP-diacylglycerol phosphatidylhydrolase</fullName>
    </alternativeName>
    <alternativeName>
        <fullName evidence="1">CDP-diglyceride hydrolase</fullName>
    </alternativeName>
</protein>
<feature type="chain" id="PRO_1000119584" description="CDP-diacylglycerol pyrophosphatase">
    <location>
        <begin position="1"/>
        <end position="251"/>
    </location>
</feature>
<feature type="transmembrane region" description="Helical" evidence="1">
    <location>
        <begin position="4"/>
        <end position="24"/>
    </location>
</feature>
<accession>B7NU89</accession>
<reference key="1">
    <citation type="journal article" date="2009" name="PLoS Genet.">
        <title>Organised genome dynamics in the Escherichia coli species results in highly diverse adaptive paths.</title>
        <authorList>
            <person name="Touchon M."/>
            <person name="Hoede C."/>
            <person name="Tenaillon O."/>
            <person name="Barbe V."/>
            <person name="Baeriswyl S."/>
            <person name="Bidet P."/>
            <person name="Bingen E."/>
            <person name="Bonacorsi S."/>
            <person name="Bouchier C."/>
            <person name="Bouvet O."/>
            <person name="Calteau A."/>
            <person name="Chiapello H."/>
            <person name="Clermont O."/>
            <person name="Cruveiller S."/>
            <person name="Danchin A."/>
            <person name="Diard M."/>
            <person name="Dossat C."/>
            <person name="Karoui M.E."/>
            <person name="Frapy E."/>
            <person name="Garry L."/>
            <person name="Ghigo J.M."/>
            <person name="Gilles A.M."/>
            <person name="Johnson J."/>
            <person name="Le Bouguenec C."/>
            <person name="Lescat M."/>
            <person name="Mangenot S."/>
            <person name="Martinez-Jehanne V."/>
            <person name="Matic I."/>
            <person name="Nassif X."/>
            <person name="Oztas S."/>
            <person name="Petit M.A."/>
            <person name="Pichon C."/>
            <person name="Rouy Z."/>
            <person name="Ruf C.S."/>
            <person name="Schneider D."/>
            <person name="Tourret J."/>
            <person name="Vacherie B."/>
            <person name="Vallenet D."/>
            <person name="Medigue C."/>
            <person name="Rocha E.P.C."/>
            <person name="Denamur E."/>
        </authorList>
    </citation>
    <scope>NUCLEOTIDE SEQUENCE [LARGE SCALE GENOMIC DNA]</scope>
    <source>
        <strain>IAI39 / ExPEC</strain>
    </source>
</reference>
<keyword id="KW-0997">Cell inner membrane</keyword>
<keyword id="KW-1003">Cell membrane</keyword>
<keyword id="KW-0378">Hydrolase</keyword>
<keyword id="KW-0444">Lipid biosynthesis</keyword>
<keyword id="KW-0443">Lipid metabolism</keyword>
<keyword id="KW-0472">Membrane</keyword>
<keyword id="KW-0594">Phospholipid biosynthesis</keyword>
<keyword id="KW-1208">Phospholipid metabolism</keyword>
<keyword id="KW-0812">Transmembrane</keyword>
<keyword id="KW-1133">Transmembrane helix</keyword>
<proteinExistence type="inferred from homology"/>
<gene>
    <name evidence="1" type="primary">cdh</name>
    <name type="ordered locus">ECIAI39_3078</name>
</gene>
<evidence type="ECO:0000255" key="1">
    <source>
        <dbReference type="HAMAP-Rule" id="MF_00319"/>
    </source>
</evidence>
<sequence>MKKAGLLFLVMIVIAVVAAGIGYWKLTGEESDTLRKIVLEECLPNQQQNQNPSPCAEVKPNAGYVVLKDLNGPLQYLLMPTYRINGTESPLLTDPSTPNFFWLAWQGRDFMSKKYGQPVPDRAVSLAINSRTGRTQNHFHIHISCIRPDVREQLDNNLANISSRWLPLPGGLRGHEYLARRVTESELVQRSPFMMLAEEVPEAREHMGSYGLAMVRQSDNSFVLLATQRNLLTLNRASAEEIQDHQCEILR</sequence>
<dbReference type="EC" id="3.6.1.26" evidence="1"/>
<dbReference type="EMBL" id="CU928164">
    <property type="protein sequence ID" value="CAR19197.1"/>
    <property type="molecule type" value="Genomic_DNA"/>
</dbReference>
<dbReference type="RefSeq" id="WP_012602489.1">
    <property type="nucleotide sequence ID" value="NC_011750.1"/>
</dbReference>
<dbReference type="RefSeq" id="YP_002409008.1">
    <property type="nucleotide sequence ID" value="NC_011750.1"/>
</dbReference>
<dbReference type="SMR" id="B7NU89"/>
<dbReference type="STRING" id="585057.ECIAI39_3078"/>
<dbReference type="KEGG" id="ect:ECIAI39_3078"/>
<dbReference type="PATRIC" id="fig|585057.6.peg.3190"/>
<dbReference type="HOGENOM" id="CLU_077117_0_1_6"/>
<dbReference type="UniPathway" id="UPA00609">
    <property type="reaction ID" value="UER00664"/>
</dbReference>
<dbReference type="Proteomes" id="UP000000749">
    <property type="component" value="Chromosome"/>
</dbReference>
<dbReference type="GO" id="GO:0005886">
    <property type="term" value="C:plasma membrane"/>
    <property type="evidence" value="ECO:0007669"/>
    <property type="project" value="UniProtKB-SubCell"/>
</dbReference>
<dbReference type="GO" id="GO:0008715">
    <property type="term" value="F:CDP-diacylglycerol diphosphatase activity"/>
    <property type="evidence" value="ECO:0007669"/>
    <property type="project" value="UniProtKB-UniRule"/>
</dbReference>
<dbReference type="GO" id="GO:0046342">
    <property type="term" value="P:CDP-diacylglycerol catabolic process"/>
    <property type="evidence" value="ECO:0007669"/>
    <property type="project" value="UniProtKB-UniRule"/>
</dbReference>
<dbReference type="GO" id="GO:0008654">
    <property type="term" value="P:phospholipid biosynthetic process"/>
    <property type="evidence" value="ECO:0007669"/>
    <property type="project" value="UniProtKB-KW"/>
</dbReference>
<dbReference type="FunFam" id="3.30.428.30:FF:000001">
    <property type="entry name" value="CDP-diacylglycerol pyrophosphatase"/>
    <property type="match status" value="1"/>
</dbReference>
<dbReference type="Gene3D" id="3.30.428.30">
    <property type="entry name" value="HIT family - CDH-like"/>
    <property type="match status" value="1"/>
</dbReference>
<dbReference type="HAMAP" id="MF_00319">
    <property type="entry name" value="Cdh"/>
    <property type="match status" value="1"/>
</dbReference>
<dbReference type="InterPro" id="IPR003763">
    <property type="entry name" value="CDP-diacylglyc_Pase"/>
</dbReference>
<dbReference type="InterPro" id="IPR015993">
    <property type="entry name" value="CDP-diacylglyc_Pase_proteobac"/>
</dbReference>
<dbReference type="InterPro" id="IPR036265">
    <property type="entry name" value="HIT-like_sf"/>
</dbReference>
<dbReference type="NCBIfam" id="TIGR00672">
    <property type="entry name" value="cdh"/>
    <property type="match status" value="1"/>
</dbReference>
<dbReference type="NCBIfam" id="NF003986">
    <property type="entry name" value="PRK05471.1-5"/>
    <property type="match status" value="1"/>
</dbReference>
<dbReference type="NCBIfam" id="NF003987">
    <property type="entry name" value="PRK05471.1-6"/>
    <property type="match status" value="1"/>
</dbReference>
<dbReference type="Pfam" id="PF02611">
    <property type="entry name" value="CDH"/>
    <property type="match status" value="1"/>
</dbReference>
<dbReference type="PIRSF" id="PIRSF001273">
    <property type="entry name" value="CDH"/>
    <property type="match status" value="1"/>
</dbReference>
<dbReference type="SUPFAM" id="SSF54197">
    <property type="entry name" value="HIT-like"/>
    <property type="match status" value="1"/>
</dbReference>
<comment type="catalytic activity">
    <reaction evidence="1">
        <text>a CDP-1,2-diacyl-sn-glycerol + H2O = a 1,2-diacyl-sn-glycero-3-phosphate + CMP + 2 H(+)</text>
        <dbReference type="Rhea" id="RHEA:15221"/>
        <dbReference type="ChEBI" id="CHEBI:15377"/>
        <dbReference type="ChEBI" id="CHEBI:15378"/>
        <dbReference type="ChEBI" id="CHEBI:58332"/>
        <dbReference type="ChEBI" id="CHEBI:58608"/>
        <dbReference type="ChEBI" id="CHEBI:60377"/>
        <dbReference type="EC" id="3.6.1.26"/>
    </reaction>
</comment>
<comment type="pathway">
    <text evidence="1">Phospholipid metabolism; CDP-diacylglycerol degradation; phosphatidate from CDP-diacylglycerol: step 1/1.</text>
</comment>
<comment type="subcellular location">
    <subcellularLocation>
        <location evidence="1">Cell inner membrane</location>
        <topology evidence="1">Single-pass membrane protein</topology>
    </subcellularLocation>
</comment>
<comment type="similarity">
    <text evidence="1">Belongs to the Cdh family.</text>
</comment>
<organism>
    <name type="scientific">Escherichia coli O7:K1 (strain IAI39 / ExPEC)</name>
    <dbReference type="NCBI Taxonomy" id="585057"/>
    <lineage>
        <taxon>Bacteria</taxon>
        <taxon>Pseudomonadati</taxon>
        <taxon>Pseudomonadota</taxon>
        <taxon>Gammaproteobacteria</taxon>
        <taxon>Enterobacterales</taxon>
        <taxon>Enterobacteriaceae</taxon>
        <taxon>Escherichia</taxon>
    </lineage>
</organism>
<name>CDH_ECO7I</name>